<organism>
    <name type="scientific">Catharomnion ciliatum</name>
    <name type="common">Moss</name>
    <name type="synonym">Pterigynandrum ciliatum</name>
    <dbReference type="NCBI Taxonomy" id="98733"/>
    <lineage>
        <taxon>Eukaryota</taxon>
        <taxon>Viridiplantae</taxon>
        <taxon>Streptophyta</taxon>
        <taxon>Embryophyta</taxon>
        <taxon>Bryophyta</taxon>
        <taxon>Bryophytina</taxon>
        <taxon>Bryopsida</taxon>
        <taxon>Bryidae</taxon>
        <taxon>Hypnanae</taxon>
        <taxon>Hookeriales</taxon>
        <taxon>Hypopterygiaceae</taxon>
        <taxon>Catharomnion</taxon>
    </lineage>
</organism>
<protein>
    <recommendedName>
        <fullName evidence="2">Small ribosomal subunit protein uS4c</fullName>
    </recommendedName>
    <alternativeName>
        <fullName>30S ribosomal protein S4, chloroplastic</fullName>
    </alternativeName>
</protein>
<proteinExistence type="inferred from homology"/>
<reference key="1">
    <citation type="journal article" date="2002" name="Cryptogam. Bryol.">
        <title>The systematic position of the Hypoptergiaceae (Bryopsida) inferred from rps4 gene sequences.</title>
        <authorList>
            <person name="Bloecher R."/>
            <person name="Capesius I."/>
        </authorList>
    </citation>
    <scope>NUCLEOTIDE SEQUENCE [GENOMIC DNA]</scope>
    <source>
        <tissue>Gametophyte</tissue>
    </source>
</reference>
<accession>P59137</accession>
<gene>
    <name type="primary">rps4</name>
</gene>
<sequence>MSRYRGPRVRIIRRLGALPGLTNKTPQLKSSSINQSTSNKKISQYRIRLEEKQKLRFHYGITERQLLNYVRIARKAKGSTGEVLLQLLEMRLDNIIFRLGMSPTIPGARQLVNHRHILVNGYIVDIPSYRCKPQDFITIKNQRKSETIISKNIEFYQKYKIPNHLIYNSLEKKGLVNQILDHESIGLKINELLVVEYYSRQA</sequence>
<name>RR4_CATCI</name>
<feature type="chain" id="PRO_0000132553" description="Small ribosomal subunit protein uS4c">
    <location>
        <begin position="1"/>
        <end position="202"/>
    </location>
</feature>
<feature type="domain" description="S4 RNA-binding">
    <location>
        <begin position="90"/>
        <end position="153"/>
    </location>
</feature>
<comment type="function">
    <text evidence="1">One of the primary rRNA binding proteins, it binds directly to 16S rRNA where it nucleates assembly of the body of the 30S subunit.</text>
</comment>
<comment type="function">
    <text evidence="1">With S5 and S12 plays an important role in translational accuracy.</text>
</comment>
<comment type="subunit">
    <text evidence="1">Part of the 30S ribosomal subunit. Contacts protein S5. The interaction surface between S4 and S5 is involved in control of translational fidelity (By similarity).</text>
</comment>
<comment type="subcellular location">
    <subcellularLocation>
        <location>Plastid</location>
        <location>Chloroplast</location>
    </subcellularLocation>
</comment>
<comment type="similarity">
    <text evidence="2">Belongs to the universal ribosomal protein uS4 family.</text>
</comment>
<evidence type="ECO:0000250" key="1"/>
<evidence type="ECO:0000305" key="2"/>
<keyword id="KW-0150">Chloroplast</keyword>
<keyword id="KW-0934">Plastid</keyword>
<keyword id="KW-0687">Ribonucleoprotein</keyword>
<keyword id="KW-0689">Ribosomal protein</keyword>
<keyword id="KW-0694">RNA-binding</keyword>
<keyword id="KW-0699">rRNA-binding</keyword>
<dbReference type="EMBL" id="AJ269695">
    <property type="protein sequence ID" value="CAC80635.1"/>
    <property type="molecule type" value="Genomic_DNA"/>
</dbReference>
<dbReference type="SMR" id="P59137"/>
<dbReference type="GO" id="GO:0009507">
    <property type="term" value="C:chloroplast"/>
    <property type="evidence" value="ECO:0007669"/>
    <property type="project" value="UniProtKB-SubCell"/>
</dbReference>
<dbReference type="GO" id="GO:0015935">
    <property type="term" value="C:small ribosomal subunit"/>
    <property type="evidence" value="ECO:0007669"/>
    <property type="project" value="InterPro"/>
</dbReference>
<dbReference type="GO" id="GO:0019843">
    <property type="term" value="F:rRNA binding"/>
    <property type="evidence" value="ECO:0007669"/>
    <property type="project" value="UniProtKB-UniRule"/>
</dbReference>
<dbReference type="GO" id="GO:0003735">
    <property type="term" value="F:structural constituent of ribosome"/>
    <property type="evidence" value="ECO:0007669"/>
    <property type="project" value="InterPro"/>
</dbReference>
<dbReference type="GO" id="GO:0042274">
    <property type="term" value="P:ribosomal small subunit biogenesis"/>
    <property type="evidence" value="ECO:0007669"/>
    <property type="project" value="TreeGrafter"/>
</dbReference>
<dbReference type="GO" id="GO:0006412">
    <property type="term" value="P:translation"/>
    <property type="evidence" value="ECO:0007669"/>
    <property type="project" value="UniProtKB-UniRule"/>
</dbReference>
<dbReference type="CDD" id="cd00165">
    <property type="entry name" value="S4"/>
    <property type="match status" value="1"/>
</dbReference>
<dbReference type="FunFam" id="1.10.1050.10:FF:000002">
    <property type="entry name" value="30S ribosomal protein S4, chloroplastic"/>
    <property type="match status" value="1"/>
</dbReference>
<dbReference type="FunFam" id="3.10.290.10:FF:000081">
    <property type="entry name" value="30S ribosomal protein S4, chloroplastic"/>
    <property type="match status" value="1"/>
</dbReference>
<dbReference type="Gene3D" id="1.10.1050.10">
    <property type="entry name" value="Ribosomal Protein S4 Delta 41, Chain A, domain 1"/>
    <property type="match status" value="1"/>
</dbReference>
<dbReference type="Gene3D" id="3.10.290.10">
    <property type="entry name" value="RNA-binding S4 domain"/>
    <property type="match status" value="1"/>
</dbReference>
<dbReference type="HAMAP" id="MF_01306_B">
    <property type="entry name" value="Ribosomal_uS4_B"/>
    <property type="match status" value="1"/>
</dbReference>
<dbReference type="InterPro" id="IPR022801">
    <property type="entry name" value="Ribosomal_uS4"/>
</dbReference>
<dbReference type="InterPro" id="IPR005709">
    <property type="entry name" value="Ribosomal_uS4_bac-type"/>
</dbReference>
<dbReference type="InterPro" id="IPR018079">
    <property type="entry name" value="Ribosomal_uS4_CS"/>
</dbReference>
<dbReference type="InterPro" id="IPR001912">
    <property type="entry name" value="Ribosomal_uS4_N"/>
</dbReference>
<dbReference type="InterPro" id="IPR002942">
    <property type="entry name" value="S4_RNA-bd"/>
</dbReference>
<dbReference type="InterPro" id="IPR036986">
    <property type="entry name" value="S4_RNA-bd_sf"/>
</dbReference>
<dbReference type="NCBIfam" id="NF003717">
    <property type="entry name" value="PRK05327.1"/>
    <property type="match status" value="1"/>
</dbReference>
<dbReference type="NCBIfam" id="TIGR01017">
    <property type="entry name" value="rpsD_bact"/>
    <property type="match status" value="1"/>
</dbReference>
<dbReference type="PANTHER" id="PTHR11831">
    <property type="entry name" value="30S 40S RIBOSOMAL PROTEIN"/>
    <property type="match status" value="1"/>
</dbReference>
<dbReference type="PANTHER" id="PTHR11831:SF4">
    <property type="entry name" value="SMALL RIBOSOMAL SUBUNIT PROTEIN US4M"/>
    <property type="match status" value="1"/>
</dbReference>
<dbReference type="Pfam" id="PF00163">
    <property type="entry name" value="Ribosomal_S4"/>
    <property type="match status" value="1"/>
</dbReference>
<dbReference type="Pfam" id="PF01479">
    <property type="entry name" value="S4"/>
    <property type="match status" value="1"/>
</dbReference>
<dbReference type="SMART" id="SM01390">
    <property type="entry name" value="Ribosomal_S4"/>
    <property type="match status" value="1"/>
</dbReference>
<dbReference type="SMART" id="SM00363">
    <property type="entry name" value="S4"/>
    <property type="match status" value="1"/>
</dbReference>
<dbReference type="SUPFAM" id="SSF55174">
    <property type="entry name" value="Alpha-L RNA-binding motif"/>
    <property type="match status" value="1"/>
</dbReference>
<dbReference type="PROSITE" id="PS00632">
    <property type="entry name" value="RIBOSOMAL_S4"/>
    <property type="match status" value="1"/>
</dbReference>
<dbReference type="PROSITE" id="PS50889">
    <property type="entry name" value="S4"/>
    <property type="match status" value="1"/>
</dbReference>
<geneLocation type="chloroplast"/>